<organism>
    <name type="scientific">Anguilla anguilla</name>
    <name type="common">European freshwater eel</name>
    <name type="synonym">Muraena anguilla</name>
    <dbReference type="NCBI Taxonomy" id="7936"/>
    <lineage>
        <taxon>Eukaryota</taxon>
        <taxon>Metazoa</taxon>
        <taxon>Chordata</taxon>
        <taxon>Craniata</taxon>
        <taxon>Vertebrata</taxon>
        <taxon>Euteleostomi</taxon>
        <taxon>Actinopterygii</taxon>
        <taxon>Neopterygii</taxon>
        <taxon>Teleostei</taxon>
        <taxon>Anguilliformes</taxon>
        <taxon>Anguillidae</taxon>
        <taxon>Anguilla</taxon>
    </lineage>
</organism>
<name>CYB_ANGAN</name>
<gene>
    <name type="primary">mt-cyb</name>
    <name type="synonym">cob</name>
    <name type="synonym">cytb</name>
    <name type="synonym">mtcyb</name>
</gene>
<feature type="chain" id="PRO_0000060577" description="Cytochrome b">
    <location>
        <begin position="1"/>
        <end position="379"/>
    </location>
</feature>
<feature type="transmembrane region" description="Helical" evidence="2">
    <location>
        <begin position="33"/>
        <end position="53"/>
    </location>
</feature>
<feature type="transmembrane region" description="Helical" evidence="2">
    <location>
        <begin position="77"/>
        <end position="98"/>
    </location>
</feature>
<feature type="transmembrane region" description="Helical" evidence="2">
    <location>
        <begin position="113"/>
        <end position="133"/>
    </location>
</feature>
<feature type="transmembrane region" description="Helical" evidence="2">
    <location>
        <begin position="178"/>
        <end position="198"/>
    </location>
</feature>
<feature type="transmembrane region" description="Helical" evidence="2">
    <location>
        <begin position="226"/>
        <end position="246"/>
    </location>
</feature>
<feature type="transmembrane region" description="Helical" evidence="2">
    <location>
        <begin position="288"/>
        <end position="308"/>
    </location>
</feature>
<feature type="transmembrane region" description="Helical" evidence="2">
    <location>
        <begin position="320"/>
        <end position="340"/>
    </location>
</feature>
<feature type="transmembrane region" description="Helical" evidence="2">
    <location>
        <begin position="347"/>
        <end position="367"/>
    </location>
</feature>
<feature type="binding site" description="axial binding residue" evidence="2">
    <location>
        <position position="83"/>
    </location>
    <ligand>
        <name>heme b</name>
        <dbReference type="ChEBI" id="CHEBI:60344"/>
        <label>b562</label>
    </ligand>
    <ligandPart>
        <name>Fe</name>
        <dbReference type="ChEBI" id="CHEBI:18248"/>
    </ligandPart>
</feature>
<feature type="binding site" description="axial binding residue" evidence="2">
    <location>
        <position position="97"/>
    </location>
    <ligand>
        <name>heme b</name>
        <dbReference type="ChEBI" id="CHEBI:60344"/>
        <label>b566</label>
    </ligand>
    <ligandPart>
        <name>Fe</name>
        <dbReference type="ChEBI" id="CHEBI:18248"/>
    </ligandPart>
</feature>
<feature type="binding site" description="axial binding residue" evidence="2">
    <location>
        <position position="182"/>
    </location>
    <ligand>
        <name>heme b</name>
        <dbReference type="ChEBI" id="CHEBI:60344"/>
        <label>b562</label>
    </ligand>
    <ligandPart>
        <name>Fe</name>
        <dbReference type="ChEBI" id="CHEBI:18248"/>
    </ligandPart>
</feature>
<feature type="binding site" description="axial binding residue" evidence="2">
    <location>
        <position position="196"/>
    </location>
    <ligand>
        <name>heme b</name>
        <dbReference type="ChEBI" id="CHEBI:60344"/>
        <label>b566</label>
    </ligand>
    <ligandPart>
        <name>Fe</name>
        <dbReference type="ChEBI" id="CHEBI:18248"/>
    </ligandPart>
</feature>
<feature type="binding site" evidence="2">
    <location>
        <position position="201"/>
    </location>
    <ligand>
        <name>a ubiquinone</name>
        <dbReference type="ChEBI" id="CHEBI:16389"/>
    </ligand>
</feature>
<geneLocation type="mitochondrion"/>
<comment type="function">
    <text evidence="2">Component of the ubiquinol-cytochrome c reductase complex (complex III or cytochrome b-c1 complex) that is part of the mitochondrial respiratory chain. The b-c1 complex mediates electron transfer from ubiquinol to cytochrome c. Contributes to the generation of a proton gradient across the mitochondrial membrane that is then used for ATP synthesis.</text>
</comment>
<comment type="cofactor">
    <cofactor evidence="2">
        <name>heme b</name>
        <dbReference type="ChEBI" id="CHEBI:60344"/>
    </cofactor>
    <text evidence="2">Binds 2 heme b groups non-covalently.</text>
</comment>
<comment type="subunit">
    <text evidence="2">The cytochrome bc1 complex contains 3 respiratory subunits (MT-CYB, CYC1 and UQCRFS1), 2 core proteins (UQCRC1 and UQCRC2) and probably 6 low-molecular weight proteins.</text>
</comment>
<comment type="subcellular location">
    <subcellularLocation>
        <location evidence="2">Mitochondrion inner membrane</location>
        <topology evidence="2">Multi-pass membrane protein</topology>
    </subcellularLocation>
</comment>
<comment type="miscellaneous">
    <text evidence="1">Heme 1 (or BL or b562) is low-potential and absorbs at about 562 nm, and heme 2 (or BH or b566) is high-potential and absorbs at about 566 nm.</text>
</comment>
<comment type="similarity">
    <text evidence="3 4">Belongs to the cytochrome b family.</text>
</comment>
<comment type="caution">
    <text evidence="2">The full-length protein contains only eight transmembrane helices, not nine as predicted by bioinformatics tools.</text>
</comment>
<evidence type="ECO:0000250" key="1"/>
<evidence type="ECO:0000250" key="2">
    <source>
        <dbReference type="UniProtKB" id="P00157"/>
    </source>
</evidence>
<evidence type="ECO:0000255" key="3">
    <source>
        <dbReference type="PROSITE-ProRule" id="PRU00967"/>
    </source>
</evidence>
<evidence type="ECO:0000255" key="4">
    <source>
        <dbReference type="PROSITE-ProRule" id="PRU00968"/>
    </source>
</evidence>
<dbReference type="EMBL" id="AB021776">
    <property type="protein sequence ID" value="BAB20299.1"/>
    <property type="molecule type" value="Genomic_DNA"/>
</dbReference>
<dbReference type="EMBL" id="AF006714">
    <property type="protein sequence ID" value="AAC98877.1"/>
    <property type="molecule type" value="Genomic_DNA"/>
</dbReference>
<dbReference type="EMBL" id="AF006715">
    <property type="protein sequence ID" value="AAC98878.1"/>
    <property type="molecule type" value="Genomic_DNA"/>
</dbReference>
<dbReference type="EMBL" id="AP007233">
    <property type="protein sequence ID" value="BAD77983.1"/>
    <property type="molecule type" value="Genomic_DNA"/>
</dbReference>
<dbReference type="RefSeq" id="YP_163828.1">
    <property type="nucleotide sequence ID" value="NC_006531.1"/>
</dbReference>
<dbReference type="SMR" id="Q33645"/>
<dbReference type="GeneID" id="3190267"/>
<dbReference type="KEGG" id="aang:3190267"/>
<dbReference type="CTD" id="4519"/>
<dbReference type="OMA" id="NISAWWN"/>
<dbReference type="OrthoDB" id="244at2759"/>
<dbReference type="GO" id="GO:0005743">
    <property type="term" value="C:mitochondrial inner membrane"/>
    <property type="evidence" value="ECO:0007669"/>
    <property type="project" value="UniProtKB-SubCell"/>
</dbReference>
<dbReference type="GO" id="GO:0045275">
    <property type="term" value="C:respiratory chain complex III"/>
    <property type="evidence" value="ECO:0007669"/>
    <property type="project" value="InterPro"/>
</dbReference>
<dbReference type="GO" id="GO:0046872">
    <property type="term" value="F:metal ion binding"/>
    <property type="evidence" value="ECO:0007669"/>
    <property type="project" value="UniProtKB-KW"/>
</dbReference>
<dbReference type="GO" id="GO:0008121">
    <property type="term" value="F:ubiquinol-cytochrome-c reductase activity"/>
    <property type="evidence" value="ECO:0007669"/>
    <property type="project" value="InterPro"/>
</dbReference>
<dbReference type="GO" id="GO:0006122">
    <property type="term" value="P:mitochondrial electron transport, ubiquinol to cytochrome c"/>
    <property type="evidence" value="ECO:0007669"/>
    <property type="project" value="TreeGrafter"/>
</dbReference>
<dbReference type="CDD" id="cd00290">
    <property type="entry name" value="cytochrome_b_C"/>
    <property type="match status" value="1"/>
</dbReference>
<dbReference type="CDD" id="cd00284">
    <property type="entry name" value="Cytochrome_b_N"/>
    <property type="match status" value="1"/>
</dbReference>
<dbReference type="FunFam" id="1.20.810.10:FF:000002">
    <property type="entry name" value="Cytochrome b"/>
    <property type="match status" value="1"/>
</dbReference>
<dbReference type="Gene3D" id="1.20.810.10">
    <property type="entry name" value="Cytochrome Bc1 Complex, Chain C"/>
    <property type="match status" value="1"/>
</dbReference>
<dbReference type="InterPro" id="IPR005798">
    <property type="entry name" value="Cyt_b/b6_C"/>
</dbReference>
<dbReference type="InterPro" id="IPR036150">
    <property type="entry name" value="Cyt_b/b6_C_sf"/>
</dbReference>
<dbReference type="InterPro" id="IPR005797">
    <property type="entry name" value="Cyt_b/b6_N"/>
</dbReference>
<dbReference type="InterPro" id="IPR027387">
    <property type="entry name" value="Cytb/b6-like_sf"/>
</dbReference>
<dbReference type="InterPro" id="IPR030689">
    <property type="entry name" value="Cytochrome_b"/>
</dbReference>
<dbReference type="InterPro" id="IPR048260">
    <property type="entry name" value="Cytochrome_b_C_euk/bac"/>
</dbReference>
<dbReference type="InterPro" id="IPR048259">
    <property type="entry name" value="Cytochrome_b_N_euk/bac"/>
</dbReference>
<dbReference type="InterPro" id="IPR016174">
    <property type="entry name" value="Di-haem_cyt_TM"/>
</dbReference>
<dbReference type="PANTHER" id="PTHR19271">
    <property type="entry name" value="CYTOCHROME B"/>
    <property type="match status" value="1"/>
</dbReference>
<dbReference type="PANTHER" id="PTHR19271:SF16">
    <property type="entry name" value="CYTOCHROME B"/>
    <property type="match status" value="1"/>
</dbReference>
<dbReference type="Pfam" id="PF00032">
    <property type="entry name" value="Cytochrom_B_C"/>
    <property type="match status" value="1"/>
</dbReference>
<dbReference type="Pfam" id="PF00033">
    <property type="entry name" value="Cytochrome_B"/>
    <property type="match status" value="1"/>
</dbReference>
<dbReference type="PIRSF" id="PIRSF038885">
    <property type="entry name" value="COB"/>
    <property type="match status" value="1"/>
</dbReference>
<dbReference type="SUPFAM" id="SSF81648">
    <property type="entry name" value="a domain/subunit of cytochrome bc1 complex (Ubiquinol-cytochrome c reductase)"/>
    <property type="match status" value="1"/>
</dbReference>
<dbReference type="SUPFAM" id="SSF81342">
    <property type="entry name" value="Transmembrane di-heme cytochromes"/>
    <property type="match status" value="1"/>
</dbReference>
<dbReference type="PROSITE" id="PS51003">
    <property type="entry name" value="CYTB_CTER"/>
    <property type="match status" value="1"/>
</dbReference>
<dbReference type="PROSITE" id="PS51002">
    <property type="entry name" value="CYTB_NTER"/>
    <property type="match status" value="1"/>
</dbReference>
<reference key="1">
    <citation type="thesis" date="1998" institute="Ocean Research Institute / University of Tokyo" country="Japan">
        <title>Molecular phylogeny and evolution of the freshwater eels, genus Anguilla.</title>
        <authorList>
            <person name="Aoyama J."/>
        </authorList>
    </citation>
    <scope>NUCLEOTIDE SEQUENCE [GENOMIC DNA]</scope>
    <source>
        <tissue>Liver</tissue>
    </source>
</reference>
<reference key="2">
    <citation type="journal article" date="2001" name="Mol. Phylogenet. Evol.">
        <title>A phylogeny of freshwater eels inferred from mitochondrial genes.</title>
        <authorList>
            <person name="Lin Y.S."/>
            <person name="Poh Y.P."/>
            <person name="Tzeng C.S."/>
        </authorList>
    </citation>
    <scope>NUCLEOTIDE SEQUENCE [GENOMIC DNA]</scope>
</reference>
<reference key="3">
    <citation type="journal article" date="2005" name="Mol. Phylogenet. Evol.">
        <title>Molecular phylogeny and evolution of the freshwater eels genus Anguilla based on the whole mitochondrial genome sequences.</title>
        <authorList>
            <person name="Minegishi Y."/>
            <person name="Aoyama J."/>
            <person name="Inoue J.G."/>
            <person name="Miya M."/>
            <person name="Nishida M."/>
            <person name="Tsukamoto K."/>
        </authorList>
    </citation>
    <scope>NUCLEOTIDE SEQUENCE [GENOMIC DNA]</scope>
</reference>
<sequence>MANLRKTHPLLKIANDALVDLPTPSNISAWWNFGSLLGLCLISQILTGLFLAMHYTSDISTAFSSVAHICRDVNYGWLIRNLHANGASFFFICLYLHIARGLYYGSYLYMETWNIGVVLFLLVMMTAFVGYVLPWGQMSFWGATVITNLLSAVPYVGNSLVQWIWGGFSVDNATLTRFFAFHFLFPFVVAGATMLHLLFLHETGSNNPVGLNSDADKIPFHPYFSYKDLLGFIIMLTALTMLALFYPNLLGDPDNFTPANPMVTPPHIKPEWYFLFAYAILRSIPNKLGGVLALLSSILVLMVVPILHTSKQRGLTFRPASQLLFWILVADMLVLTWIGGMPVEHPYIIIGQVASVLYFSLFLVLNPLVGWLENKVMNW</sequence>
<proteinExistence type="inferred from homology"/>
<keyword id="KW-0249">Electron transport</keyword>
<keyword id="KW-0349">Heme</keyword>
<keyword id="KW-0408">Iron</keyword>
<keyword id="KW-0472">Membrane</keyword>
<keyword id="KW-0479">Metal-binding</keyword>
<keyword id="KW-0496">Mitochondrion</keyword>
<keyword id="KW-0999">Mitochondrion inner membrane</keyword>
<keyword id="KW-0679">Respiratory chain</keyword>
<keyword id="KW-0812">Transmembrane</keyword>
<keyword id="KW-1133">Transmembrane helix</keyword>
<keyword id="KW-0813">Transport</keyword>
<keyword id="KW-0830">Ubiquinone</keyword>
<protein>
    <recommendedName>
        <fullName>Cytochrome b</fullName>
    </recommendedName>
    <alternativeName>
        <fullName>Complex III subunit 3</fullName>
    </alternativeName>
    <alternativeName>
        <fullName>Complex III subunit III</fullName>
    </alternativeName>
    <alternativeName>
        <fullName>Cytochrome b-c1 complex subunit 3</fullName>
    </alternativeName>
    <alternativeName>
        <fullName>Ubiquinol-cytochrome-c reductase complex cytochrome b subunit</fullName>
    </alternativeName>
</protein>
<accession>Q33645</accession>